<proteinExistence type="inferred from homology"/>
<accession>A7EXH9</accession>
<organism>
    <name type="scientific">Sclerotinia sclerotiorum (strain ATCC 18683 / 1980 / Ss-1)</name>
    <name type="common">White mold</name>
    <name type="synonym">Whetzelinia sclerotiorum</name>
    <dbReference type="NCBI Taxonomy" id="665079"/>
    <lineage>
        <taxon>Eukaryota</taxon>
        <taxon>Fungi</taxon>
        <taxon>Dikarya</taxon>
        <taxon>Ascomycota</taxon>
        <taxon>Pezizomycotina</taxon>
        <taxon>Leotiomycetes</taxon>
        <taxon>Helotiales</taxon>
        <taxon>Sclerotiniaceae</taxon>
        <taxon>Sclerotinia</taxon>
    </lineage>
</organism>
<dbReference type="EMBL" id="CH476634">
    <property type="protein sequence ID" value="EDN94171.1"/>
    <property type="molecule type" value="Genomic_DNA"/>
</dbReference>
<dbReference type="RefSeq" id="XP_001589405.1">
    <property type="nucleotide sequence ID" value="XM_001589355.1"/>
</dbReference>
<dbReference type="SMR" id="A7EXH9"/>
<dbReference type="FunCoup" id="A7EXH9">
    <property type="interactions" value="47"/>
</dbReference>
<dbReference type="STRING" id="665079.A7EXH9"/>
<dbReference type="GeneID" id="5485303"/>
<dbReference type="KEGG" id="ssl:SS1G_10044"/>
<dbReference type="VEuPathDB" id="FungiDB:sscle_01g003380"/>
<dbReference type="InParanoid" id="A7EXH9"/>
<dbReference type="OMA" id="PYRMIQV"/>
<dbReference type="OrthoDB" id="75724at2759"/>
<dbReference type="Proteomes" id="UP000001312">
    <property type="component" value="Unassembled WGS sequence"/>
</dbReference>
<dbReference type="GO" id="GO:0032541">
    <property type="term" value="C:cortical endoplasmic reticulum"/>
    <property type="evidence" value="ECO:0000318"/>
    <property type="project" value="GO_Central"/>
</dbReference>
<dbReference type="GO" id="GO:0005829">
    <property type="term" value="C:cytosol"/>
    <property type="evidence" value="ECO:0000318"/>
    <property type="project" value="GO_Central"/>
</dbReference>
<dbReference type="GO" id="GO:0005789">
    <property type="term" value="C:endoplasmic reticulum membrane"/>
    <property type="evidence" value="ECO:0007669"/>
    <property type="project" value="UniProtKB-SubCell"/>
</dbReference>
<dbReference type="GO" id="GO:0005886">
    <property type="term" value="C:plasma membrane"/>
    <property type="evidence" value="ECO:0000318"/>
    <property type="project" value="GO_Central"/>
</dbReference>
<dbReference type="GO" id="GO:0046872">
    <property type="term" value="F:metal ion binding"/>
    <property type="evidence" value="ECO:0007669"/>
    <property type="project" value="UniProtKB-KW"/>
</dbReference>
<dbReference type="GO" id="GO:0008526">
    <property type="term" value="F:phosphatidylinositol transfer activity"/>
    <property type="evidence" value="ECO:0000318"/>
    <property type="project" value="GO_Central"/>
</dbReference>
<dbReference type="GO" id="GO:0043001">
    <property type="term" value="P:Golgi to plasma membrane protein transport"/>
    <property type="evidence" value="ECO:0000318"/>
    <property type="project" value="GO_Central"/>
</dbReference>
<dbReference type="GO" id="GO:0017157">
    <property type="term" value="P:regulation of exocytosis"/>
    <property type="evidence" value="ECO:0000318"/>
    <property type="project" value="GO_Central"/>
</dbReference>
<dbReference type="CDD" id="cd00170">
    <property type="entry name" value="SEC14"/>
    <property type="match status" value="1"/>
</dbReference>
<dbReference type="FunFam" id="3.40.525.10:FF:000017">
    <property type="entry name" value="Phosphatidylinositol transfer protein sfh5"/>
    <property type="match status" value="1"/>
</dbReference>
<dbReference type="Gene3D" id="3.40.525.10">
    <property type="entry name" value="CRAL-TRIO lipid binding domain"/>
    <property type="match status" value="1"/>
</dbReference>
<dbReference type="InterPro" id="IPR001251">
    <property type="entry name" value="CRAL-TRIO_dom"/>
</dbReference>
<dbReference type="InterPro" id="IPR036865">
    <property type="entry name" value="CRAL-TRIO_dom_sf"/>
</dbReference>
<dbReference type="InterPro" id="IPR011074">
    <property type="entry name" value="CRAL/TRIO_N_dom"/>
</dbReference>
<dbReference type="InterPro" id="IPR036273">
    <property type="entry name" value="CRAL/TRIO_N_dom_sf"/>
</dbReference>
<dbReference type="InterPro" id="IPR042938">
    <property type="entry name" value="Sfh5"/>
</dbReference>
<dbReference type="PANTHER" id="PTHR47669">
    <property type="entry name" value="PHOSPHATIDYLINOSITOL TRANSFER PROTEIN SFH5"/>
    <property type="match status" value="1"/>
</dbReference>
<dbReference type="PANTHER" id="PTHR47669:SF1">
    <property type="entry name" value="PHOSPHATIDYLINOSITOL TRANSFER PROTEIN SFH5"/>
    <property type="match status" value="1"/>
</dbReference>
<dbReference type="Pfam" id="PF00650">
    <property type="entry name" value="CRAL_TRIO"/>
    <property type="match status" value="1"/>
</dbReference>
<dbReference type="Pfam" id="PF03765">
    <property type="entry name" value="CRAL_TRIO_N"/>
    <property type="match status" value="1"/>
</dbReference>
<dbReference type="SMART" id="SM00516">
    <property type="entry name" value="SEC14"/>
    <property type="match status" value="1"/>
</dbReference>
<dbReference type="SUPFAM" id="SSF52087">
    <property type="entry name" value="CRAL/TRIO domain"/>
    <property type="match status" value="1"/>
</dbReference>
<dbReference type="SUPFAM" id="SSF46938">
    <property type="entry name" value="CRAL/TRIO N-terminal domain"/>
    <property type="match status" value="1"/>
</dbReference>
<dbReference type="PROSITE" id="PS50191">
    <property type="entry name" value="CRAL_TRIO"/>
    <property type="match status" value="1"/>
</dbReference>
<protein>
    <recommendedName>
        <fullName>Phosphatidylinositol transfer protein sfh5</fullName>
        <shortName>PITP sfh5</shortName>
    </recommendedName>
</protein>
<name>SFH5_SCLS1</name>
<evidence type="ECO:0000250" key="1">
    <source>
        <dbReference type="UniProtKB" id="A6ZQI5"/>
    </source>
</evidence>
<evidence type="ECO:0000250" key="2">
    <source>
        <dbReference type="UniProtKB" id="P47008"/>
    </source>
</evidence>
<evidence type="ECO:0000255" key="3">
    <source>
        <dbReference type="PROSITE-ProRule" id="PRU00056"/>
    </source>
</evidence>
<evidence type="ECO:0000256" key="4">
    <source>
        <dbReference type="SAM" id="MobiDB-lite"/>
    </source>
</evidence>
<evidence type="ECO:0000305" key="5"/>
<keyword id="KW-0963">Cytoplasm</keyword>
<keyword id="KW-0256">Endoplasmic reticulum</keyword>
<keyword id="KW-0349">Heme</keyword>
<keyword id="KW-0408">Iron</keyword>
<keyword id="KW-0445">Lipid transport</keyword>
<keyword id="KW-0472">Membrane</keyword>
<keyword id="KW-0479">Metal-binding</keyword>
<keyword id="KW-0492">Microsome</keyword>
<keyword id="KW-1185">Reference proteome</keyword>
<keyword id="KW-0813">Transport</keyword>
<comment type="function">
    <text evidence="2">Non-classical phosphatidylinositol (PtdIns) transfer protein (PITP), which exhibits PtdIns-binding/transfer activity in the absence of detectable PtdCho-binding/transfer activity. Regulates PtdIns(4,5)P2 homeostasis at the plasma membrane. Heme-binding protein that may play a role in organic oxidant-induced stress responses.</text>
</comment>
<comment type="catalytic activity">
    <reaction evidence="2">
        <text>a 1,2-diacyl-sn-glycero-3-phospho-(1D-myo-inositol)(in) = a 1,2-diacyl-sn-glycero-3-phospho-(1D-myo-inositol)(out)</text>
        <dbReference type="Rhea" id="RHEA:38691"/>
        <dbReference type="ChEBI" id="CHEBI:57880"/>
    </reaction>
    <physiologicalReaction direction="left-to-right" evidence="2">
        <dbReference type="Rhea" id="RHEA:38692"/>
    </physiologicalReaction>
</comment>
<comment type="cofactor">
    <cofactor evidence="1">
        <name>heme b</name>
        <dbReference type="ChEBI" id="CHEBI:60344"/>
    </cofactor>
</comment>
<comment type="subcellular location">
    <subcellularLocation>
        <location evidence="2">Cytoplasm</location>
    </subcellularLocation>
    <subcellularLocation>
        <location evidence="2">Endoplasmic reticulum membrane</location>
        <topology evidence="2">Peripheral membrane protein</topology>
    </subcellularLocation>
    <subcellularLocation>
        <location evidence="2">Microsome membrane</location>
        <topology evidence="2">Peripheral membrane protein</topology>
    </subcellularLocation>
</comment>
<comment type="similarity">
    <text evidence="5">Belongs to the SFH5 family.</text>
</comment>
<sequence length="413" mass="45780">MSAEVDTNIPKENVPEEVVEAKTTTTTTTMEPEPLIVEDLKSTTIESTPVKIGDPTSNEQIAREEPKPTITEPSTTKSVAAEPTTEQHQETAVKLESVKEADAEAAARVESTEDADGEKALSTSQPSVSFDKTTKTHDGSPLSKFFSELPEILKVAGHNEMWGIILDPSEDHVQTSIVLEKFLRANTKDVTKAKAQLTEALKWRKAMQPQKLLVDTEFDKVKFGKLGYVTSYPTSEGGKEVITWNIYGAVKDTKKTFSDVPEFLRWRAALMELSIRELDLASATEKIPENGPDPYRMIQVHDYLNVSFLRMDPGIRAASKETIQTFSMAYPELLKEKFFVNVPMVMGWVFTAMKIFLSADTIKKFHPLSYGSDLGAEIPGIAEKLPKEYGGKGEELESGFTVKYSGDDVPKSD</sequence>
<gene>
    <name type="primary">sfh5</name>
    <name type="ORF">SS1G_10044</name>
</gene>
<reference key="1">
    <citation type="journal article" date="2011" name="PLoS Genet.">
        <title>Genomic analysis of the necrotrophic fungal pathogens Sclerotinia sclerotiorum and Botrytis cinerea.</title>
        <authorList>
            <person name="Amselem J."/>
            <person name="Cuomo C.A."/>
            <person name="van Kan J.A.L."/>
            <person name="Viaud M."/>
            <person name="Benito E.P."/>
            <person name="Couloux A."/>
            <person name="Coutinho P.M."/>
            <person name="de Vries R.P."/>
            <person name="Dyer P.S."/>
            <person name="Fillinger S."/>
            <person name="Fournier E."/>
            <person name="Gout L."/>
            <person name="Hahn M."/>
            <person name="Kohn L."/>
            <person name="Lapalu N."/>
            <person name="Plummer K.M."/>
            <person name="Pradier J.-M."/>
            <person name="Quevillon E."/>
            <person name="Sharon A."/>
            <person name="Simon A."/>
            <person name="ten Have A."/>
            <person name="Tudzynski B."/>
            <person name="Tudzynski P."/>
            <person name="Wincker P."/>
            <person name="Andrew M."/>
            <person name="Anthouard V."/>
            <person name="Beever R.E."/>
            <person name="Beffa R."/>
            <person name="Benoit I."/>
            <person name="Bouzid O."/>
            <person name="Brault B."/>
            <person name="Chen Z."/>
            <person name="Choquer M."/>
            <person name="Collemare J."/>
            <person name="Cotton P."/>
            <person name="Danchin E.G."/>
            <person name="Da Silva C."/>
            <person name="Gautier A."/>
            <person name="Giraud C."/>
            <person name="Giraud T."/>
            <person name="Gonzalez C."/>
            <person name="Grossetete S."/>
            <person name="Gueldener U."/>
            <person name="Henrissat B."/>
            <person name="Howlett B.J."/>
            <person name="Kodira C."/>
            <person name="Kretschmer M."/>
            <person name="Lappartient A."/>
            <person name="Leroch M."/>
            <person name="Levis C."/>
            <person name="Mauceli E."/>
            <person name="Neuveglise C."/>
            <person name="Oeser B."/>
            <person name="Pearson M."/>
            <person name="Poulain J."/>
            <person name="Poussereau N."/>
            <person name="Quesneville H."/>
            <person name="Rascle C."/>
            <person name="Schumacher J."/>
            <person name="Segurens B."/>
            <person name="Sexton A."/>
            <person name="Silva E."/>
            <person name="Sirven C."/>
            <person name="Soanes D.M."/>
            <person name="Talbot N.J."/>
            <person name="Templeton M."/>
            <person name="Yandava C."/>
            <person name="Yarden O."/>
            <person name="Zeng Q."/>
            <person name="Rollins J.A."/>
            <person name="Lebrun M.-H."/>
            <person name="Dickman M."/>
        </authorList>
    </citation>
    <scope>NUCLEOTIDE SEQUENCE [LARGE SCALE GENOMIC DNA]</scope>
    <source>
        <strain>ATCC 18683 / 1980 / Ss-1</strain>
    </source>
</reference>
<feature type="chain" id="PRO_0000324988" description="Phosphatidylinositol transfer protein sfh5">
    <location>
        <begin position="1"/>
        <end position="413"/>
    </location>
</feature>
<feature type="domain" description="CRAL-TRIO" evidence="3">
    <location>
        <begin position="222"/>
        <end position="397"/>
    </location>
</feature>
<feature type="region of interest" description="Disordered" evidence="4">
    <location>
        <begin position="1"/>
        <end position="141"/>
    </location>
</feature>
<feature type="compositionally biased region" description="Basic and acidic residues" evidence="4">
    <location>
        <begin position="85"/>
        <end position="111"/>
    </location>
</feature>
<feature type="compositionally biased region" description="Polar residues" evidence="4">
    <location>
        <begin position="121"/>
        <end position="131"/>
    </location>
</feature>
<feature type="binding site" evidence="1">
    <location>
        <position position="247"/>
    </location>
    <ligand>
        <name>heme</name>
        <dbReference type="ChEBI" id="CHEBI:30413"/>
    </ligand>
</feature>
<feature type="binding site" evidence="1">
    <location>
        <position position="267"/>
    </location>
    <ligand>
        <name>heme</name>
        <dbReference type="ChEBI" id="CHEBI:30413"/>
    </ligand>
</feature>
<feature type="binding site" evidence="1">
    <location>
        <position position="301"/>
    </location>
    <ligand>
        <name>heme</name>
        <dbReference type="ChEBI" id="CHEBI:30413"/>
    </ligand>
</feature>
<feature type="binding site" description="proximal binding residue" evidence="1">
    <location>
        <position position="303"/>
    </location>
    <ligand>
        <name>heme</name>
        <dbReference type="ChEBI" id="CHEBI:30413"/>
    </ligand>
    <ligandPart>
        <name>Fe</name>
        <dbReference type="ChEBI" id="CHEBI:18248"/>
    </ligandPart>
</feature>
<feature type="binding site" evidence="1">
    <location>
        <position position="337"/>
    </location>
    <ligand>
        <name>heme</name>
        <dbReference type="ChEBI" id="CHEBI:30413"/>
    </ligand>
</feature>